<sequence>MNLNATILGQAIAFILFVWFCMKYVWPPLMAAIEKRQKEIADGLASAERAHKDLDLAKASATDQLKKAKAEAQVIIEQANKRRAQILDEAKTEAEQERTKIVAQAQAEIEAERKRAREELRKQVAILAVAGAEKIIERSVDEAANSDIVDKLVAEL</sequence>
<organism>
    <name type="scientific">Salmonella typhi</name>
    <dbReference type="NCBI Taxonomy" id="90370"/>
    <lineage>
        <taxon>Bacteria</taxon>
        <taxon>Pseudomonadati</taxon>
        <taxon>Pseudomonadota</taxon>
        <taxon>Gammaproteobacteria</taxon>
        <taxon>Enterobacterales</taxon>
        <taxon>Enterobacteriaceae</taxon>
        <taxon>Salmonella</taxon>
    </lineage>
</organism>
<keyword id="KW-0066">ATP synthesis</keyword>
<keyword id="KW-0997">Cell inner membrane</keyword>
<keyword id="KW-1003">Cell membrane</keyword>
<keyword id="KW-0138">CF(0)</keyword>
<keyword id="KW-0375">Hydrogen ion transport</keyword>
<keyword id="KW-0406">Ion transport</keyword>
<keyword id="KW-0472">Membrane</keyword>
<keyword id="KW-0812">Transmembrane</keyword>
<keyword id="KW-1133">Transmembrane helix</keyword>
<keyword id="KW-0813">Transport</keyword>
<accession>Q8XGD7</accession>
<accession>Q7AM16</accession>
<gene>
    <name evidence="1" type="primary">atpF</name>
    <name type="ordered locus">STY3909</name>
    <name type="ordered locus">t3650</name>
</gene>
<dbReference type="EMBL" id="AE014613">
    <property type="protein sequence ID" value="AAO71147.1"/>
    <property type="molecule type" value="Genomic_DNA"/>
</dbReference>
<dbReference type="EMBL" id="AL513382">
    <property type="protein sequence ID" value="CAD03126.1"/>
    <property type="molecule type" value="Genomic_DNA"/>
</dbReference>
<dbReference type="RefSeq" id="NP_458074.1">
    <property type="nucleotide sequence ID" value="NC_003198.1"/>
</dbReference>
<dbReference type="RefSeq" id="WP_001052212.1">
    <property type="nucleotide sequence ID" value="NZ_WSUR01000023.1"/>
</dbReference>
<dbReference type="SMR" id="Q8XGD7"/>
<dbReference type="STRING" id="220341.gene:17587769"/>
<dbReference type="GeneID" id="66758158"/>
<dbReference type="KEGG" id="stt:t3650"/>
<dbReference type="KEGG" id="sty:STY3909"/>
<dbReference type="PATRIC" id="fig|220341.7.peg.3989"/>
<dbReference type="eggNOG" id="COG0711">
    <property type="taxonomic scope" value="Bacteria"/>
</dbReference>
<dbReference type="HOGENOM" id="CLU_079215_4_5_6"/>
<dbReference type="OMA" id="ILAWFTM"/>
<dbReference type="OrthoDB" id="9788020at2"/>
<dbReference type="Proteomes" id="UP000000541">
    <property type="component" value="Chromosome"/>
</dbReference>
<dbReference type="Proteomes" id="UP000002670">
    <property type="component" value="Chromosome"/>
</dbReference>
<dbReference type="GO" id="GO:0005886">
    <property type="term" value="C:plasma membrane"/>
    <property type="evidence" value="ECO:0007669"/>
    <property type="project" value="UniProtKB-SubCell"/>
</dbReference>
<dbReference type="GO" id="GO:0045259">
    <property type="term" value="C:proton-transporting ATP synthase complex"/>
    <property type="evidence" value="ECO:0007669"/>
    <property type="project" value="UniProtKB-KW"/>
</dbReference>
<dbReference type="GO" id="GO:0046933">
    <property type="term" value="F:proton-transporting ATP synthase activity, rotational mechanism"/>
    <property type="evidence" value="ECO:0007669"/>
    <property type="project" value="UniProtKB-UniRule"/>
</dbReference>
<dbReference type="GO" id="GO:0046961">
    <property type="term" value="F:proton-transporting ATPase activity, rotational mechanism"/>
    <property type="evidence" value="ECO:0007669"/>
    <property type="project" value="TreeGrafter"/>
</dbReference>
<dbReference type="CDD" id="cd06503">
    <property type="entry name" value="ATP-synt_Fo_b"/>
    <property type="match status" value="1"/>
</dbReference>
<dbReference type="FunFam" id="1.20.5.620:FF:000001">
    <property type="entry name" value="ATP synthase subunit b"/>
    <property type="match status" value="1"/>
</dbReference>
<dbReference type="Gene3D" id="1.20.5.620">
    <property type="entry name" value="F1F0 ATP synthase subunit B, membrane domain"/>
    <property type="match status" value="1"/>
</dbReference>
<dbReference type="HAMAP" id="MF_01398">
    <property type="entry name" value="ATP_synth_b_bprime"/>
    <property type="match status" value="1"/>
</dbReference>
<dbReference type="InterPro" id="IPR028987">
    <property type="entry name" value="ATP_synth_B-like_membr_sf"/>
</dbReference>
<dbReference type="InterPro" id="IPR002146">
    <property type="entry name" value="ATP_synth_b/b'su_bac/chlpt"/>
</dbReference>
<dbReference type="InterPro" id="IPR005864">
    <property type="entry name" value="ATP_synth_F0_bsu_bac"/>
</dbReference>
<dbReference type="InterPro" id="IPR050059">
    <property type="entry name" value="ATP_synthase_B_chain"/>
</dbReference>
<dbReference type="NCBIfam" id="TIGR01144">
    <property type="entry name" value="ATP_synt_b"/>
    <property type="match status" value="1"/>
</dbReference>
<dbReference type="NCBIfam" id="NF004411">
    <property type="entry name" value="PRK05759.1-2"/>
    <property type="match status" value="1"/>
</dbReference>
<dbReference type="NCBIfam" id="NF004413">
    <property type="entry name" value="PRK05759.1-4"/>
    <property type="match status" value="1"/>
</dbReference>
<dbReference type="PANTHER" id="PTHR33445:SF1">
    <property type="entry name" value="ATP SYNTHASE SUBUNIT B"/>
    <property type="match status" value="1"/>
</dbReference>
<dbReference type="PANTHER" id="PTHR33445">
    <property type="entry name" value="ATP SYNTHASE SUBUNIT B', CHLOROPLASTIC"/>
    <property type="match status" value="1"/>
</dbReference>
<dbReference type="Pfam" id="PF00430">
    <property type="entry name" value="ATP-synt_B"/>
    <property type="match status" value="1"/>
</dbReference>
<dbReference type="SUPFAM" id="SSF81573">
    <property type="entry name" value="F1F0 ATP synthase subunit B, membrane domain"/>
    <property type="match status" value="1"/>
</dbReference>
<reference key="1">
    <citation type="journal article" date="2003" name="J. Bacteriol.">
        <title>Comparative genomics of Salmonella enterica serovar Typhi strains Ty2 and CT18.</title>
        <authorList>
            <person name="Deng W."/>
            <person name="Liou S.-R."/>
            <person name="Plunkett G. III"/>
            <person name="Mayhew G.F."/>
            <person name="Rose D.J."/>
            <person name="Burland V."/>
            <person name="Kodoyianni V."/>
            <person name="Schwartz D.C."/>
            <person name="Blattner F.R."/>
        </authorList>
    </citation>
    <scope>NUCLEOTIDE SEQUENCE [LARGE SCALE GENOMIC DNA]</scope>
    <source>
        <strain>ATCC 700931 / Ty2</strain>
    </source>
</reference>
<reference key="2">
    <citation type="journal article" date="2001" name="Nature">
        <title>Complete genome sequence of a multiple drug resistant Salmonella enterica serovar Typhi CT18.</title>
        <authorList>
            <person name="Parkhill J."/>
            <person name="Dougan G."/>
            <person name="James K.D."/>
            <person name="Thomson N.R."/>
            <person name="Pickard D."/>
            <person name="Wain J."/>
            <person name="Churcher C.M."/>
            <person name="Mungall K.L."/>
            <person name="Bentley S.D."/>
            <person name="Holden M.T.G."/>
            <person name="Sebaihia M."/>
            <person name="Baker S."/>
            <person name="Basham D."/>
            <person name="Brooks K."/>
            <person name="Chillingworth T."/>
            <person name="Connerton P."/>
            <person name="Cronin A."/>
            <person name="Davis P."/>
            <person name="Davies R.M."/>
            <person name="Dowd L."/>
            <person name="White N."/>
            <person name="Farrar J."/>
            <person name="Feltwell T."/>
            <person name="Hamlin N."/>
            <person name="Haque A."/>
            <person name="Hien T.T."/>
            <person name="Holroyd S."/>
            <person name="Jagels K."/>
            <person name="Krogh A."/>
            <person name="Larsen T.S."/>
            <person name="Leather S."/>
            <person name="Moule S."/>
            <person name="O'Gaora P."/>
            <person name="Parry C."/>
            <person name="Quail M.A."/>
            <person name="Rutherford K.M."/>
            <person name="Simmonds M."/>
            <person name="Skelton J."/>
            <person name="Stevens K."/>
            <person name="Whitehead S."/>
            <person name="Barrell B.G."/>
        </authorList>
    </citation>
    <scope>NUCLEOTIDE SEQUENCE [LARGE SCALE GENOMIC DNA]</scope>
    <source>
        <strain>CT18</strain>
    </source>
</reference>
<name>ATPF_SALTI</name>
<protein>
    <recommendedName>
        <fullName evidence="1">ATP synthase subunit b</fullName>
    </recommendedName>
    <alternativeName>
        <fullName evidence="1">ATP synthase F(0) sector subunit b</fullName>
    </alternativeName>
    <alternativeName>
        <fullName evidence="1">ATPase subunit I</fullName>
    </alternativeName>
    <alternativeName>
        <fullName evidence="1">F-type ATPase subunit b</fullName>
        <shortName evidence="1">F-ATPase subunit b</shortName>
    </alternativeName>
</protein>
<proteinExistence type="inferred from homology"/>
<comment type="function">
    <text evidence="1">F(1)F(0) ATP synthase produces ATP from ADP in the presence of a proton or sodium gradient. F-type ATPases consist of two structural domains, F(1) containing the extramembraneous catalytic core and F(0) containing the membrane proton channel, linked together by a central stalk and a peripheral stalk. During catalysis, ATP synthesis in the catalytic domain of F(1) is coupled via a rotary mechanism of the central stalk subunits to proton translocation.</text>
</comment>
<comment type="function">
    <text evidence="1">Component of the F(0) channel, it forms part of the peripheral stalk, linking F(1) to F(0).</text>
</comment>
<comment type="subunit">
    <text evidence="1">F-type ATPases have 2 components, F(1) - the catalytic core - and F(0) - the membrane proton channel. F(1) has five subunits: alpha(3), beta(3), gamma(1), delta(1), epsilon(1). F(0) has three main subunits: a(1), b(2) and c(10-14). The alpha and beta chains form an alternating ring which encloses part of the gamma chain. F(1) is attached to F(0) by a central stalk formed by the gamma and epsilon chains, while a peripheral stalk is formed by the delta and b chains.</text>
</comment>
<comment type="subcellular location">
    <subcellularLocation>
        <location evidence="1">Cell inner membrane</location>
        <topology evidence="1">Single-pass membrane protein</topology>
    </subcellularLocation>
</comment>
<comment type="similarity">
    <text evidence="1">Belongs to the ATPase B chain family.</text>
</comment>
<feature type="chain" id="PRO_0000368750" description="ATP synthase subunit b">
    <location>
        <begin position="1"/>
        <end position="156"/>
    </location>
</feature>
<feature type="transmembrane region" description="Helical" evidence="1">
    <location>
        <begin position="11"/>
        <end position="31"/>
    </location>
</feature>
<evidence type="ECO:0000255" key="1">
    <source>
        <dbReference type="HAMAP-Rule" id="MF_01398"/>
    </source>
</evidence>